<evidence type="ECO:0000255" key="1">
    <source>
        <dbReference type="HAMAP-Rule" id="MF_01849"/>
    </source>
</evidence>
<evidence type="ECO:0000255" key="2">
    <source>
        <dbReference type="PROSITE-ProRule" id="PRU01266"/>
    </source>
</evidence>
<reference key="1">
    <citation type="submission" date="2006-12" db="EMBL/GenBank/DDBJ databases">
        <title>Complete sequence of chromosome of Mycobacterium sp. KMS.</title>
        <authorList>
            <consortium name="US DOE Joint Genome Institute"/>
            <person name="Copeland A."/>
            <person name="Lucas S."/>
            <person name="Lapidus A."/>
            <person name="Barry K."/>
            <person name="Detter J.C."/>
            <person name="Glavina del Rio T."/>
            <person name="Hammon N."/>
            <person name="Israni S."/>
            <person name="Dalin E."/>
            <person name="Tice H."/>
            <person name="Pitluck S."/>
            <person name="Kiss H."/>
            <person name="Brettin T."/>
            <person name="Bruce D."/>
            <person name="Han C."/>
            <person name="Tapia R."/>
            <person name="Gilna P."/>
            <person name="Schmutz J."/>
            <person name="Larimer F."/>
            <person name="Land M."/>
            <person name="Hauser L."/>
            <person name="Kyrpides N."/>
            <person name="Mikhailova N."/>
            <person name="Miller C.D."/>
            <person name="Richardson P."/>
        </authorList>
    </citation>
    <scope>NUCLEOTIDE SEQUENCE [LARGE SCALE GENOMIC DNA]</scope>
    <source>
        <strain>KMS</strain>
    </source>
</reference>
<comment type="function">
    <text evidence="1">Specifically methylates position 2 of adenine 2503 in 23S rRNA and position 2 of adenine 37 in tRNAs.</text>
</comment>
<comment type="catalytic activity">
    <reaction evidence="1">
        <text>adenosine(2503) in 23S rRNA + 2 reduced [2Fe-2S]-[ferredoxin] + 2 S-adenosyl-L-methionine = 2-methyladenosine(2503) in 23S rRNA + 5'-deoxyadenosine + L-methionine + 2 oxidized [2Fe-2S]-[ferredoxin] + S-adenosyl-L-homocysteine</text>
        <dbReference type="Rhea" id="RHEA:42916"/>
        <dbReference type="Rhea" id="RHEA-COMP:10000"/>
        <dbReference type="Rhea" id="RHEA-COMP:10001"/>
        <dbReference type="Rhea" id="RHEA-COMP:10152"/>
        <dbReference type="Rhea" id="RHEA-COMP:10282"/>
        <dbReference type="ChEBI" id="CHEBI:17319"/>
        <dbReference type="ChEBI" id="CHEBI:33737"/>
        <dbReference type="ChEBI" id="CHEBI:33738"/>
        <dbReference type="ChEBI" id="CHEBI:57844"/>
        <dbReference type="ChEBI" id="CHEBI:57856"/>
        <dbReference type="ChEBI" id="CHEBI:59789"/>
        <dbReference type="ChEBI" id="CHEBI:74411"/>
        <dbReference type="ChEBI" id="CHEBI:74497"/>
        <dbReference type="EC" id="2.1.1.192"/>
    </reaction>
</comment>
<comment type="catalytic activity">
    <reaction evidence="1">
        <text>adenosine(37) in tRNA + 2 reduced [2Fe-2S]-[ferredoxin] + 2 S-adenosyl-L-methionine = 2-methyladenosine(37) in tRNA + 5'-deoxyadenosine + L-methionine + 2 oxidized [2Fe-2S]-[ferredoxin] + S-adenosyl-L-homocysteine</text>
        <dbReference type="Rhea" id="RHEA:43332"/>
        <dbReference type="Rhea" id="RHEA-COMP:10000"/>
        <dbReference type="Rhea" id="RHEA-COMP:10001"/>
        <dbReference type="Rhea" id="RHEA-COMP:10162"/>
        <dbReference type="Rhea" id="RHEA-COMP:10485"/>
        <dbReference type="ChEBI" id="CHEBI:17319"/>
        <dbReference type="ChEBI" id="CHEBI:33737"/>
        <dbReference type="ChEBI" id="CHEBI:33738"/>
        <dbReference type="ChEBI" id="CHEBI:57844"/>
        <dbReference type="ChEBI" id="CHEBI:57856"/>
        <dbReference type="ChEBI" id="CHEBI:59789"/>
        <dbReference type="ChEBI" id="CHEBI:74411"/>
        <dbReference type="ChEBI" id="CHEBI:74497"/>
        <dbReference type="EC" id="2.1.1.192"/>
    </reaction>
</comment>
<comment type="cofactor">
    <cofactor evidence="1">
        <name>[4Fe-4S] cluster</name>
        <dbReference type="ChEBI" id="CHEBI:49883"/>
    </cofactor>
    <text evidence="1">Binds 1 [4Fe-4S] cluster. The cluster is coordinated with 3 cysteines and an exchangeable S-adenosyl-L-methionine.</text>
</comment>
<comment type="subcellular location">
    <subcellularLocation>
        <location evidence="1">Cytoplasm</location>
    </subcellularLocation>
</comment>
<comment type="miscellaneous">
    <text evidence="1">Reaction proceeds by a ping-pong mechanism involving intermediate methylation of a conserved cysteine residue.</text>
</comment>
<comment type="similarity">
    <text evidence="1">Belongs to the radical SAM superfamily. RlmN family.</text>
</comment>
<gene>
    <name evidence="1" type="primary">rlmN</name>
    <name type="ordered locus">Mkms_2052</name>
</gene>
<name>RLMN_MYCSK</name>
<feature type="chain" id="PRO_0000350266" description="Probable dual-specificity RNA methyltransferase RlmN">
    <location>
        <begin position="1"/>
        <end position="374"/>
    </location>
</feature>
<feature type="domain" description="Radical SAM core" evidence="2">
    <location>
        <begin position="114"/>
        <end position="361"/>
    </location>
</feature>
<feature type="active site" description="Proton acceptor" evidence="1">
    <location>
        <position position="108"/>
    </location>
</feature>
<feature type="active site" description="S-methylcysteine intermediate" evidence="1">
    <location>
        <position position="367"/>
    </location>
</feature>
<feature type="binding site" evidence="1">
    <location>
        <position position="128"/>
    </location>
    <ligand>
        <name>[4Fe-4S] cluster</name>
        <dbReference type="ChEBI" id="CHEBI:49883"/>
        <note>4Fe-4S-S-AdoMet</note>
    </ligand>
</feature>
<feature type="binding site" evidence="1">
    <location>
        <position position="132"/>
    </location>
    <ligand>
        <name>[4Fe-4S] cluster</name>
        <dbReference type="ChEBI" id="CHEBI:49883"/>
        <note>4Fe-4S-S-AdoMet</note>
    </ligand>
</feature>
<feature type="binding site" evidence="1">
    <location>
        <position position="135"/>
    </location>
    <ligand>
        <name>[4Fe-4S] cluster</name>
        <dbReference type="ChEBI" id="CHEBI:49883"/>
        <note>4Fe-4S-S-AdoMet</note>
    </ligand>
</feature>
<feature type="binding site" evidence="1">
    <location>
        <begin position="188"/>
        <end position="189"/>
    </location>
    <ligand>
        <name>S-adenosyl-L-methionine</name>
        <dbReference type="ChEBI" id="CHEBI:59789"/>
    </ligand>
</feature>
<feature type="binding site" evidence="1">
    <location>
        <position position="222"/>
    </location>
    <ligand>
        <name>S-adenosyl-L-methionine</name>
        <dbReference type="ChEBI" id="CHEBI:59789"/>
    </ligand>
</feature>
<feature type="binding site" evidence="1">
    <location>
        <begin position="245"/>
        <end position="247"/>
    </location>
    <ligand>
        <name>S-adenosyl-L-methionine</name>
        <dbReference type="ChEBI" id="CHEBI:59789"/>
    </ligand>
</feature>
<feature type="binding site" evidence="1">
    <location>
        <position position="324"/>
    </location>
    <ligand>
        <name>S-adenosyl-L-methionine</name>
        <dbReference type="ChEBI" id="CHEBI:59789"/>
    </ligand>
</feature>
<feature type="disulfide bond" description="(transient)" evidence="1">
    <location>
        <begin position="121"/>
        <end position="367"/>
    </location>
</feature>
<accession>A1UEJ3</accession>
<protein>
    <recommendedName>
        <fullName evidence="1">Probable dual-specificity RNA methyltransferase RlmN</fullName>
        <ecNumber evidence="1">2.1.1.192</ecNumber>
    </recommendedName>
    <alternativeName>
        <fullName evidence="1">23S rRNA (adenine(2503)-C(2))-methyltransferase</fullName>
    </alternativeName>
    <alternativeName>
        <fullName evidence="1">23S rRNA m2A2503 methyltransferase</fullName>
    </alternativeName>
    <alternativeName>
        <fullName evidence="1">Ribosomal RNA large subunit methyltransferase N</fullName>
    </alternativeName>
    <alternativeName>
        <fullName evidence="1">tRNA (adenine(37)-C(2))-methyltransferase</fullName>
    </alternativeName>
    <alternativeName>
        <fullName evidence="1">tRNA m2A37 methyltransferase</fullName>
    </alternativeName>
</protein>
<keyword id="KW-0004">4Fe-4S</keyword>
<keyword id="KW-0963">Cytoplasm</keyword>
<keyword id="KW-1015">Disulfide bond</keyword>
<keyword id="KW-0408">Iron</keyword>
<keyword id="KW-0411">Iron-sulfur</keyword>
<keyword id="KW-0479">Metal-binding</keyword>
<keyword id="KW-0489">Methyltransferase</keyword>
<keyword id="KW-0698">rRNA processing</keyword>
<keyword id="KW-0949">S-adenosyl-L-methionine</keyword>
<keyword id="KW-0808">Transferase</keyword>
<keyword id="KW-0819">tRNA processing</keyword>
<proteinExistence type="inferred from homology"/>
<organism>
    <name type="scientific">Mycobacterium sp. (strain KMS)</name>
    <dbReference type="NCBI Taxonomy" id="189918"/>
    <lineage>
        <taxon>Bacteria</taxon>
        <taxon>Bacillati</taxon>
        <taxon>Actinomycetota</taxon>
        <taxon>Actinomycetes</taxon>
        <taxon>Mycobacteriales</taxon>
        <taxon>Mycobacteriaceae</taxon>
        <taxon>Mycobacterium</taxon>
    </lineage>
</organism>
<dbReference type="EC" id="2.1.1.192" evidence="1"/>
<dbReference type="EMBL" id="CP000518">
    <property type="protein sequence ID" value="ABL91251.1"/>
    <property type="molecule type" value="Genomic_DNA"/>
</dbReference>
<dbReference type="SMR" id="A1UEJ3"/>
<dbReference type="STRING" id="189918.Mkms_2052"/>
<dbReference type="KEGG" id="mkm:Mkms_2052"/>
<dbReference type="HOGENOM" id="CLU_029101_0_2_11"/>
<dbReference type="OrthoDB" id="9793973at2"/>
<dbReference type="GO" id="GO:0005737">
    <property type="term" value="C:cytoplasm"/>
    <property type="evidence" value="ECO:0007669"/>
    <property type="project" value="UniProtKB-SubCell"/>
</dbReference>
<dbReference type="GO" id="GO:0051539">
    <property type="term" value="F:4 iron, 4 sulfur cluster binding"/>
    <property type="evidence" value="ECO:0007669"/>
    <property type="project" value="UniProtKB-UniRule"/>
</dbReference>
<dbReference type="GO" id="GO:0046872">
    <property type="term" value="F:metal ion binding"/>
    <property type="evidence" value="ECO:0007669"/>
    <property type="project" value="UniProtKB-KW"/>
</dbReference>
<dbReference type="GO" id="GO:0070040">
    <property type="term" value="F:rRNA (adenine(2503)-C2-)-methyltransferase activity"/>
    <property type="evidence" value="ECO:0007669"/>
    <property type="project" value="UniProtKB-UniRule"/>
</dbReference>
<dbReference type="GO" id="GO:0019843">
    <property type="term" value="F:rRNA binding"/>
    <property type="evidence" value="ECO:0007669"/>
    <property type="project" value="UniProtKB-UniRule"/>
</dbReference>
<dbReference type="GO" id="GO:0002935">
    <property type="term" value="F:tRNA (adenine(37)-C2)-methyltransferase activity"/>
    <property type="evidence" value="ECO:0007669"/>
    <property type="project" value="UniProtKB-UniRule"/>
</dbReference>
<dbReference type="GO" id="GO:0000049">
    <property type="term" value="F:tRNA binding"/>
    <property type="evidence" value="ECO:0007669"/>
    <property type="project" value="UniProtKB-UniRule"/>
</dbReference>
<dbReference type="GO" id="GO:0070475">
    <property type="term" value="P:rRNA base methylation"/>
    <property type="evidence" value="ECO:0007669"/>
    <property type="project" value="UniProtKB-UniRule"/>
</dbReference>
<dbReference type="GO" id="GO:0030488">
    <property type="term" value="P:tRNA methylation"/>
    <property type="evidence" value="ECO:0007669"/>
    <property type="project" value="UniProtKB-UniRule"/>
</dbReference>
<dbReference type="CDD" id="cd01335">
    <property type="entry name" value="Radical_SAM"/>
    <property type="match status" value="1"/>
</dbReference>
<dbReference type="FunFam" id="3.20.20.70:FF:000014">
    <property type="entry name" value="Probable dual-specificity RNA methyltransferase RlmN"/>
    <property type="match status" value="1"/>
</dbReference>
<dbReference type="Gene3D" id="1.10.150.530">
    <property type="match status" value="1"/>
</dbReference>
<dbReference type="Gene3D" id="3.20.20.70">
    <property type="entry name" value="Aldolase class I"/>
    <property type="match status" value="1"/>
</dbReference>
<dbReference type="HAMAP" id="MF_01849">
    <property type="entry name" value="RNA_methyltr_RlmN"/>
    <property type="match status" value="1"/>
</dbReference>
<dbReference type="InterPro" id="IPR013785">
    <property type="entry name" value="Aldolase_TIM"/>
</dbReference>
<dbReference type="InterPro" id="IPR040072">
    <property type="entry name" value="Methyltransferase_A"/>
</dbReference>
<dbReference type="InterPro" id="IPR027492">
    <property type="entry name" value="RNA_MTrfase_RlmN"/>
</dbReference>
<dbReference type="InterPro" id="IPR004383">
    <property type="entry name" value="rRNA_lsu_MTrfase_RlmN/Cfr"/>
</dbReference>
<dbReference type="InterPro" id="IPR007197">
    <property type="entry name" value="rSAM"/>
</dbReference>
<dbReference type="NCBIfam" id="TIGR00048">
    <property type="entry name" value="rRNA_mod_RlmN"/>
    <property type="match status" value="1"/>
</dbReference>
<dbReference type="PANTHER" id="PTHR30544">
    <property type="entry name" value="23S RRNA METHYLTRANSFERASE"/>
    <property type="match status" value="1"/>
</dbReference>
<dbReference type="PANTHER" id="PTHR30544:SF5">
    <property type="entry name" value="RADICAL SAM CORE DOMAIN-CONTAINING PROTEIN"/>
    <property type="match status" value="1"/>
</dbReference>
<dbReference type="Pfam" id="PF04055">
    <property type="entry name" value="Radical_SAM"/>
    <property type="match status" value="1"/>
</dbReference>
<dbReference type="PIRSF" id="PIRSF006004">
    <property type="entry name" value="CHP00048"/>
    <property type="match status" value="1"/>
</dbReference>
<dbReference type="SFLD" id="SFLDF00275">
    <property type="entry name" value="adenosine_C2_methyltransferase"/>
    <property type="match status" value="1"/>
</dbReference>
<dbReference type="SFLD" id="SFLDG01062">
    <property type="entry name" value="methyltransferase_(Class_A)"/>
    <property type="match status" value="1"/>
</dbReference>
<dbReference type="SUPFAM" id="SSF102114">
    <property type="entry name" value="Radical SAM enzymes"/>
    <property type="match status" value="1"/>
</dbReference>
<dbReference type="PROSITE" id="PS51918">
    <property type="entry name" value="RADICAL_SAM"/>
    <property type="match status" value="1"/>
</dbReference>
<sequence length="374" mass="40544">MPNPLPLVFDAPRRAKPPRHFADLDATARAAAVAELGLPAFRAKQLATQYYGRLTADPQQMTDLPAAVREQVAEALFPDLLTAVREIETDAGETRKVLWRAVDGTTFESVLMRYSDRNTVCISSQAGCGMACPFCATGQGGLQRNLSTAEILEQVRAAAVELRDRDGEGIAPAARGGRLSNIVFMGMGEPLANYNRVIAAVRRIVAPPPDGFGISARSVTVSTVGLAPAIRKLADERLNVTLALSLHAPDDELRDTLVPVNNRWKVSEALDAARYYADVTGRRVSIEYALIRDVNDQPWRADLLGKRLHGALGPLVHVNVIPLNPTPGSEWDASPKPAEREFVRRVRERGVSCTVRDTRGREIAAACGQLAAEG</sequence>